<keyword id="KW-0687">Ribonucleoprotein</keyword>
<keyword id="KW-0689">Ribosomal protein</keyword>
<keyword id="KW-0694">RNA-binding</keyword>
<keyword id="KW-0699">rRNA-binding</keyword>
<comment type="function">
    <text evidence="1">One of the primary rRNA binding proteins, this protein initially binds near the 5'-end of the 23S rRNA. It is important during the early stages of 50S assembly. It makes multiple contacts with different domains of the 23S rRNA in the assembled 50S subunit and ribosome.</text>
</comment>
<comment type="function">
    <text evidence="1">Forms part of the polypeptide exit tunnel.</text>
</comment>
<comment type="subunit">
    <text evidence="1">Part of the 50S ribosomal subunit.</text>
</comment>
<comment type="similarity">
    <text evidence="1">Belongs to the universal ribosomal protein uL4 family.</text>
</comment>
<proteinExistence type="inferred from homology"/>
<accession>A4WVK7</accession>
<sequence>MKAEVIKLDASSAGSIELDDAIFGLEPRADILHRVVRWQRAKAQAGTHSVLGKSDVSYSTKKIYRQKGTGGARHGSKKAPIFRHGGVYKGPTPRSHAHDLNKKFRALGLKHALSSKATTGNLIVIEDIAMSEAKTALLAKAVKELGWKRVLVIDGADINENFAKAARNLEGIDVLPSIGANVYDILKRDTLVITKAGVEALEARLK</sequence>
<feature type="chain" id="PRO_1000052482" description="Large ribosomal subunit protein uL4">
    <location>
        <begin position="1"/>
        <end position="206"/>
    </location>
</feature>
<gene>
    <name evidence="1" type="primary">rplD</name>
    <name type="ordered locus">Rsph17025_2533</name>
</gene>
<evidence type="ECO:0000255" key="1">
    <source>
        <dbReference type="HAMAP-Rule" id="MF_01328"/>
    </source>
</evidence>
<evidence type="ECO:0000305" key="2"/>
<dbReference type="EMBL" id="CP000661">
    <property type="protein sequence ID" value="ABP71421.1"/>
    <property type="molecule type" value="Genomic_DNA"/>
</dbReference>
<dbReference type="SMR" id="A4WVK7"/>
<dbReference type="STRING" id="349102.Rsph17025_2533"/>
<dbReference type="KEGG" id="rsq:Rsph17025_2533"/>
<dbReference type="eggNOG" id="COG0088">
    <property type="taxonomic scope" value="Bacteria"/>
</dbReference>
<dbReference type="HOGENOM" id="CLU_041575_5_1_5"/>
<dbReference type="BioCyc" id="RSPH349102:G1G8M-2611-MONOMER"/>
<dbReference type="GO" id="GO:1990904">
    <property type="term" value="C:ribonucleoprotein complex"/>
    <property type="evidence" value="ECO:0007669"/>
    <property type="project" value="UniProtKB-KW"/>
</dbReference>
<dbReference type="GO" id="GO:0005840">
    <property type="term" value="C:ribosome"/>
    <property type="evidence" value="ECO:0007669"/>
    <property type="project" value="UniProtKB-KW"/>
</dbReference>
<dbReference type="GO" id="GO:0019843">
    <property type="term" value="F:rRNA binding"/>
    <property type="evidence" value="ECO:0007669"/>
    <property type="project" value="UniProtKB-UniRule"/>
</dbReference>
<dbReference type="GO" id="GO:0003735">
    <property type="term" value="F:structural constituent of ribosome"/>
    <property type="evidence" value="ECO:0007669"/>
    <property type="project" value="InterPro"/>
</dbReference>
<dbReference type="GO" id="GO:0006412">
    <property type="term" value="P:translation"/>
    <property type="evidence" value="ECO:0007669"/>
    <property type="project" value="UniProtKB-UniRule"/>
</dbReference>
<dbReference type="Gene3D" id="3.40.1370.10">
    <property type="match status" value="1"/>
</dbReference>
<dbReference type="HAMAP" id="MF_01328_B">
    <property type="entry name" value="Ribosomal_uL4_B"/>
    <property type="match status" value="1"/>
</dbReference>
<dbReference type="InterPro" id="IPR002136">
    <property type="entry name" value="Ribosomal_uL4"/>
</dbReference>
<dbReference type="InterPro" id="IPR013005">
    <property type="entry name" value="Ribosomal_uL4-like"/>
</dbReference>
<dbReference type="InterPro" id="IPR023574">
    <property type="entry name" value="Ribosomal_uL4_dom_sf"/>
</dbReference>
<dbReference type="NCBIfam" id="TIGR03953">
    <property type="entry name" value="rplD_bact"/>
    <property type="match status" value="1"/>
</dbReference>
<dbReference type="PANTHER" id="PTHR10746">
    <property type="entry name" value="50S RIBOSOMAL PROTEIN L4"/>
    <property type="match status" value="1"/>
</dbReference>
<dbReference type="PANTHER" id="PTHR10746:SF6">
    <property type="entry name" value="LARGE RIBOSOMAL SUBUNIT PROTEIN UL4M"/>
    <property type="match status" value="1"/>
</dbReference>
<dbReference type="Pfam" id="PF00573">
    <property type="entry name" value="Ribosomal_L4"/>
    <property type="match status" value="1"/>
</dbReference>
<dbReference type="SUPFAM" id="SSF52166">
    <property type="entry name" value="Ribosomal protein L4"/>
    <property type="match status" value="1"/>
</dbReference>
<protein>
    <recommendedName>
        <fullName evidence="1">Large ribosomal subunit protein uL4</fullName>
    </recommendedName>
    <alternativeName>
        <fullName evidence="2">50S ribosomal protein L4</fullName>
    </alternativeName>
</protein>
<organism>
    <name type="scientific">Cereibacter sphaeroides (strain ATCC 17025 / ATH 2.4.3)</name>
    <name type="common">Rhodobacter sphaeroides</name>
    <dbReference type="NCBI Taxonomy" id="349102"/>
    <lineage>
        <taxon>Bacteria</taxon>
        <taxon>Pseudomonadati</taxon>
        <taxon>Pseudomonadota</taxon>
        <taxon>Alphaproteobacteria</taxon>
        <taxon>Rhodobacterales</taxon>
        <taxon>Paracoccaceae</taxon>
        <taxon>Cereibacter</taxon>
    </lineage>
</organism>
<name>RL4_CERS5</name>
<reference key="1">
    <citation type="submission" date="2007-04" db="EMBL/GenBank/DDBJ databases">
        <title>Complete sequence of chromosome of Rhodobacter sphaeroides ATCC 17025.</title>
        <authorList>
            <consortium name="US DOE Joint Genome Institute"/>
            <person name="Copeland A."/>
            <person name="Lucas S."/>
            <person name="Lapidus A."/>
            <person name="Barry K."/>
            <person name="Detter J.C."/>
            <person name="Glavina del Rio T."/>
            <person name="Hammon N."/>
            <person name="Israni S."/>
            <person name="Dalin E."/>
            <person name="Tice H."/>
            <person name="Pitluck S."/>
            <person name="Chertkov O."/>
            <person name="Brettin T."/>
            <person name="Bruce D."/>
            <person name="Han C."/>
            <person name="Schmutz J."/>
            <person name="Larimer F."/>
            <person name="Land M."/>
            <person name="Hauser L."/>
            <person name="Kyrpides N."/>
            <person name="Kim E."/>
            <person name="Richardson P."/>
            <person name="Mackenzie C."/>
            <person name="Choudhary M."/>
            <person name="Donohue T.J."/>
            <person name="Kaplan S."/>
        </authorList>
    </citation>
    <scope>NUCLEOTIDE SEQUENCE [LARGE SCALE GENOMIC DNA]</scope>
    <source>
        <strain>ATCC 17025 / ATH 2.4.3</strain>
    </source>
</reference>